<name>YQGE_SALPC</name>
<sequence>MNLQHHFLIAMPALQDPIFRRSVVYICEHNQDGAMGIIVNKPLENLQIEGILEKLKITPEPRDSAIRLDKAVMLGGPLAEDRGFILHTPPSRFASSIRISDNTVITTSRDVLETLGTQQQPSDVLVALGYASWDKGQLEQELLDNAWLTAPADLNILFKTPIAERWREAAKLIGIDILTMPGVAGHA</sequence>
<accession>C0PY73</accession>
<gene>
    <name evidence="1" type="primary">yqgE</name>
    <name type="ordered locus">SPC_3161</name>
</gene>
<proteinExistence type="inferred from homology"/>
<organism>
    <name type="scientific">Salmonella paratyphi C (strain RKS4594)</name>
    <dbReference type="NCBI Taxonomy" id="476213"/>
    <lineage>
        <taxon>Bacteria</taxon>
        <taxon>Pseudomonadati</taxon>
        <taxon>Pseudomonadota</taxon>
        <taxon>Gammaproteobacteria</taxon>
        <taxon>Enterobacterales</taxon>
        <taxon>Enterobacteriaceae</taxon>
        <taxon>Salmonella</taxon>
    </lineage>
</organism>
<dbReference type="EMBL" id="CP000857">
    <property type="protein sequence ID" value="ACN47247.1"/>
    <property type="molecule type" value="Genomic_DNA"/>
</dbReference>
<dbReference type="RefSeq" id="WP_001053171.1">
    <property type="nucleotide sequence ID" value="NC_012125.1"/>
</dbReference>
<dbReference type="SMR" id="C0PY73"/>
<dbReference type="KEGG" id="sei:SPC_3161"/>
<dbReference type="HOGENOM" id="CLU_057596_1_0_6"/>
<dbReference type="Proteomes" id="UP000001599">
    <property type="component" value="Chromosome"/>
</dbReference>
<dbReference type="GO" id="GO:0005829">
    <property type="term" value="C:cytosol"/>
    <property type="evidence" value="ECO:0007669"/>
    <property type="project" value="TreeGrafter"/>
</dbReference>
<dbReference type="FunFam" id="3.30.70.1300:FF:000001">
    <property type="entry name" value="UPF0301 protein YqgE"/>
    <property type="match status" value="1"/>
</dbReference>
<dbReference type="Gene3D" id="3.40.1740.10">
    <property type="entry name" value="VC0467-like"/>
    <property type="match status" value="1"/>
</dbReference>
<dbReference type="Gene3D" id="3.30.70.1300">
    <property type="entry name" value="VC0467-like domains"/>
    <property type="match status" value="1"/>
</dbReference>
<dbReference type="HAMAP" id="MF_00758">
    <property type="entry name" value="UPF0301"/>
    <property type="match status" value="1"/>
</dbReference>
<dbReference type="InterPro" id="IPR003774">
    <property type="entry name" value="AlgH-like"/>
</dbReference>
<dbReference type="NCBIfam" id="NF001266">
    <property type="entry name" value="PRK00228.1-1"/>
    <property type="match status" value="1"/>
</dbReference>
<dbReference type="PANTHER" id="PTHR30327">
    <property type="entry name" value="UNCHARACTERIZED PROTEIN YQGE"/>
    <property type="match status" value="1"/>
</dbReference>
<dbReference type="PANTHER" id="PTHR30327:SF1">
    <property type="entry name" value="UPF0301 PROTEIN YQGE"/>
    <property type="match status" value="1"/>
</dbReference>
<dbReference type="Pfam" id="PF02622">
    <property type="entry name" value="DUF179"/>
    <property type="match status" value="1"/>
</dbReference>
<dbReference type="SUPFAM" id="SSF143456">
    <property type="entry name" value="VC0467-like"/>
    <property type="match status" value="1"/>
</dbReference>
<reference key="1">
    <citation type="journal article" date="2009" name="PLoS ONE">
        <title>Salmonella paratyphi C: genetic divergence from Salmonella choleraesuis and pathogenic convergence with Salmonella typhi.</title>
        <authorList>
            <person name="Liu W.-Q."/>
            <person name="Feng Y."/>
            <person name="Wang Y."/>
            <person name="Zou Q.-H."/>
            <person name="Chen F."/>
            <person name="Guo J.-T."/>
            <person name="Peng Y.-H."/>
            <person name="Jin Y."/>
            <person name="Li Y.-G."/>
            <person name="Hu S.-N."/>
            <person name="Johnston R.N."/>
            <person name="Liu G.-R."/>
            <person name="Liu S.-L."/>
        </authorList>
    </citation>
    <scope>NUCLEOTIDE SEQUENCE [LARGE SCALE GENOMIC DNA]</scope>
    <source>
        <strain>RKS4594</strain>
    </source>
</reference>
<evidence type="ECO:0000255" key="1">
    <source>
        <dbReference type="HAMAP-Rule" id="MF_00758"/>
    </source>
</evidence>
<protein>
    <recommendedName>
        <fullName evidence="1">UPF0301 protein YqgE</fullName>
    </recommendedName>
</protein>
<comment type="similarity">
    <text evidence="1">Belongs to the UPF0301 (AlgH) family.</text>
</comment>
<feature type="chain" id="PRO_1000148393" description="UPF0301 protein YqgE">
    <location>
        <begin position="1"/>
        <end position="187"/>
    </location>
</feature>